<dbReference type="EC" id="2.7.4.3" evidence="1"/>
<dbReference type="EMBL" id="CP000238">
    <property type="protein sequence ID" value="ABF14062.1"/>
    <property type="molecule type" value="Genomic_DNA"/>
</dbReference>
<dbReference type="RefSeq" id="WP_011520322.1">
    <property type="nucleotide sequence ID" value="NC_007984.1"/>
</dbReference>
<dbReference type="SMR" id="Q1LTX5"/>
<dbReference type="STRING" id="374463.BCI_0118"/>
<dbReference type="KEGG" id="bci:BCI_0118"/>
<dbReference type="HOGENOM" id="CLU_032354_1_2_6"/>
<dbReference type="OrthoDB" id="9805030at2"/>
<dbReference type="UniPathway" id="UPA00588">
    <property type="reaction ID" value="UER00649"/>
</dbReference>
<dbReference type="Proteomes" id="UP000002427">
    <property type="component" value="Chromosome"/>
</dbReference>
<dbReference type="GO" id="GO:0005737">
    <property type="term" value="C:cytoplasm"/>
    <property type="evidence" value="ECO:0007669"/>
    <property type="project" value="UniProtKB-SubCell"/>
</dbReference>
<dbReference type="GO" id="GO:0004017">
    <property type="term" value="F:adenylate kinase activity"/>
    <property type="evidence" value="ECO:0007669"/>
    <property type="project" value="UniProtKB-UniRule"/>
</dbReference>
<dbReference type="GO" id="GO:0005524">
    <property type="term" value="F:ATP binding"/>
    <property type="evidence" value="ECO:0007669"/>
    <property type="project" value="UniProtKB-UniRule"/>
</dbReference>
<dbReference type="GO" id="GO:0044209">
    <property type="term" value="P:AMP salvage"/>
    <property type="evidence" value="ECO:0007669"/>
    <property type="project" value="UniProtKB-UniRule"/>
</dbReference>
<dbReference type="CDD" id="cd01428">
    <property type="entry name" value="ADK"/>
    <property type="match status" value="1"/>
</dbReference>
<dbReference type="FunFam" id="3.40.50.300:FF:000106">
    <property type="entry name" value="Adenylate kinase mitochondrial"/>
    <property type="match status" value="1"/>
</dbReference>
<dbReference type="Gene3D" id="3.40.50.300">
    <property type="entry name" value="P-loop containing nucleotide triphosphate hydrolases"/>
    <property type="match status" value="1"/>
</dbReference>
<dbReference type="HAMAP" id="MF_00235">
    <property type="entry name" value="Adenylate_kinase_Adk"/>
    <property type="match status" value="1"/>
</dbReference>
<dbReference type="InterPro" id="IPR006259">
    <property type="entry name" value="Adenyl_kin_sub"/>
</dbReference>
<dbReference type="InterPro" id="IPR000850">
    <property type="entry name" value="Adenylat/UMP-CMP_kin"/>
</dbReference>
<dbReference type="InterPro" id="IPR033690">
    <property type="entry name" value="Adenylat_kinase_CS"/>
</dbReference>
<dbReference type="InterPro" id="IPR007862">
    <property type="entry name" value="Adenylate_kinase_lid-dom"/>
</dbReference>
<dbReference type="InterPro" id="IPR027417">
    <property type="entry name" value="P-loop_NTPase"/>
</dbReference>
<dbReference type="NCBIfam" id="TIGR01351">
    <property type="entry name" value="adk"/>
    <property type="match status" value="1"/>
</dbReference>
<dbReference type="NCBIfam" id="NF001379">
    <property type="entry name" value="PRK00279.1-1"/>
    <property type="match status" value="1"/>
</dbReference>
<dbReference type="PANTHER" id="PTHR23359">
    <property type="entry name" value="NUCLEOTIDE KINASE"/>
    <property type="match status" value="1"/>
</dbReference>
<dbReference type="Pfam" id="PF00406">
    <property type="entry name" value="ADK"/>
    <property type="match status" value="1"/>
</dbReference>
<dbReference type="Pfam" id="PF05191">
    <property type="entry name" value="ADK_lid"/>
    <property type="match status" value="1"/>
</dbReference>
<dbReference type="PRINTS" id="PR00094">
    <property type="entry name" value="ADENYLTKNASE"/>
</dbReference>
<dbReference type="SUPFAM" id="SSF52540">
    <property type="entry name" value="P-loop containing nucleoside triphosphate hydrolases"/>
    <property type="match status" value="1"/>
</dbReference>
<dbReference type="PROSITE" id="PS00113">
    <property type="entry name" value="ADENYLATE_KINASE"/>
    <property type="match status" value="1"/>
</dbReference>
<name>KAD_BAUCH</name>
<gene>
    <name evidence="1" type="primary">adk</name>
    <name type="ordered locus">BCI_0118</name>
</gene>
<accession>Q1LTX5</accession>
<evidence type="ECO:0000255" key="1">
    <source>
        <dbReference type="HAMAP-Rule" id="MF_00235"/>
    </source>
</evidence>
<keyword id="KW-0067">ATP-binding</keyword>
<keyword id="KW-0963">Cytoplasm</keyword>
<keyword id="KW-0418">Kinase</keyword>
<keyword id="KW-0545">Nucleotide biosynthesis</keyword>
<keyword id="KW-0547">Nucleotide-binding</keyword>
<keyword id="KW-1185">Reference proteome</keyword>
<keyword id="KW-0808">Transferase</keyword>
<feature type="chain" id="PRO_1000058788" description="Adenylate kinase">
    <location>
        <begin position="1"/>
        <end position="213"/>
    </location>
</feature>
<feature type="region of interest" description="NMP" evidence="1">
    <location>
        <begin position="30"/>
        <end position="59"/>
    </location>
</feature>
<feature type="region of interest" description="LID" evidence="1">
    <location>
        <begin position="122"/>
        <end position="159"/>
    </location>
</feature>
<feature type="binding site" evidence="1">
    <location>
        <begin position="10"/>
        <end position="15"/>
    </location>
    <ligand>
        <name>ATP</name>
        <dbReference type="ChEBI" id="CHEBI:30616"/>
    </ligand>
</feature>
<feature type="binding site" evidence="1">
    <location>
        <position position="31"/>
    </location>
    <ligand>
        <name>AMP</name>
        <dbReference type="ChEBI" id="CHEBI:456215"/>
    </ligand>
</feature>
<feature type="binding site" evidence="1">
    <location>
        <position position="36"/>
    </location>
    <ligand>
        <name>AMP</name>
        <dbReference type="ChEBI" id="CHEBI:456215"/>
    </ligand>
</feature>
<feature type="binding site" evidence="1">
    <location>
        <begin position="57"/>
        <end position="59"/>
    </location>
    <ligand>
        <name>AMP</name>
        <dbReference type="ChEBI" id="CHEBI:456215"/>
    </ligand>
</feature>
<feature type="binding site" evidence="1">
    <location>
        <begin position="85"/>
        <end position="88"/>
    </location>
    <ligand>
        <name>AMP</name>
        <dbReference type="ChEBI" id="CHEBI:456215"/>
    </ligand>
</feature>
<feature type="binding site" evidence="1">
    <location>
        <position position="92"/>
    </location>
    <ligand>
        <name>AMP</name>
        <dbReference type="ChEBI" id="CHEBI:456215"/>
    </ligand>
</feature>
<feature type="binding site" evidence="1">
    <location>
        <position position="123"/>
    </location>
    <ligand>
        <name>ATP</name>
        <dbReference type="ChEBI" id="CHEBI:30616"/>
    </ligand>
</feature>
<feature type="binding site" evidence="1">
    <location>
        <begin position="132"/>
        <end position="133"/>
    </location>
    <ligand>
        <name>ATP</name>
        <dbReference type="ChEBI" id="CHEBI:30616"/>
    </ligand>
</feature>
<feature type="binding site" evidence="1">
    <location>
        <position position="156"/>
    </location>
    <ligand>
        <name>AMP</name>
        <dbReference type="ChEBI" id="CHEBI:456215"/>
    </ligand>
</feature>
<feature type="binding site" evidence="1">
    <location>
        <position position="167"/>
    </location>
    <ligand>
        <name>AMP</name>
        <dbReference type="ChEBI" id="CHEBI:456215"/>
    </ligand>
</feature>
<feature type="binding site" evidence="1">
    <location>
        <position position="199"/>
    </location>
    <ligand>
        <name>ATP</name>
        <dbReference type="ChEBI" id="CHEBI:30616"/>
    </ligand>
</feature>
<organism>
    <name type="scientific">Baumannia cicadellinicola subsp. Homalodisca coagulata</name>
    <dbReference type="NCBI Taxonomy" id="374463"/>
    <lineage>
        <taxon>Bacteria</taxon>
        <taxon>Pseudomonadati</taxon>
        <taxon>Pseudomonadota</taxon>
        <taxon>Gammaproteobacteria</taxon>
        <taxon>Candidatus Palibaumannia</taxon>
    </lineage>
</organism>
<sequence length="213" mass="24030">MRIILLGAPGSGKGTQAQFIMKKYGIPHISTGDMLRTTVNKESVLGKNIQAIIKLGNLVPDQLVIELVKERIIQYDCSKGFLLDGFPRTLTQAYAMEVAGINVDIVLILRIPDKIIINRIVGRMVHEPSGRIYHVTFNPPKQKGKDDITGENLIIRQDDKEDTVRHRLIGYHQQMIPIITYYNNANIRNIRCFTIDANCPISTLNEKIVRILG</sequence>
<reference key="1">
    <citation type="journal article" date="2006" name="PLoS Biol.">
        <title>Metabolic complementarity and genomics of the dual bacterial symbiosis of sharpshooters.</title>
        <authorList>
            <person name="Wu D."/>
            <person name="Daugherty S.C."/>
            <person name="Van Aken S.E."/>
            <person name="Pai G.H."/>
            <person name="Watkins K.L."/>
            <person name="Khouri H."/>
            <person name="Tallon L.J."/>
            <person name="Zaborsky J.M."/>
            <person name="Dunbar H.E."/>
            <person name="Tran P.L."/>
            <person name="Moran N.A."/>
            <person name="Eisen J.A."/>
        </authorList>
    </citation>
    <scope>NUCLEOTIDE SEQUENCE [LARGE SCALE GENOMIC DNA]</scope>
</reference>
<proteinExistence type="inferred from homology"/>
<protein>
    <recommendedName>
        <fullName evidence="1">Adenylate kinase</fullName>
        <shortName evidence="1">AK</shortName>
        <ecNumber evidence="1">2.7.4.3</ecNumber>
    </recommendedName>
    <alternativeName>
        <fullName evidence="1">ATP-AMP transphosphorylase</fullName>
    </alternativeName>
    <alternativeName>
        <fullName evidence="1">ATP:AMP phosphotransferase</fullName>
    </alternativeName>
    <alternativeName>
        <fullName evidence="1">Adenylate monophosphate kinase</fullName>
    </alternativeName>
</protein>
<comment type="function">
    <text evidence="1">Catalyzes the reversible transfer of the terminal phosphate group between ATP and AMP. Plays an important role in cellular energy homeostasis and in adenine nucleotide metabolism.</text>
</comment>
<comment type="catalytic activity">
    <reaction evidence="1">
        <text>AMP + ATP = 2 ADP</text>
        <dbReference type="Rhea" id="RHEA:12973"/>
        <dbReference type="ChEBI" id="CHEBI:30616"/>
        <dbReference type="ChEBI" id="CHEBI:456215"/>
        <dbReference type="ChEBI" id="CHEBI:456216"/>
        <dbReference type="EC" id="2.7.4.3"/>
    </reaction>
</comment>
<comment type="pathway">
    <text evidence="1">Purine metabolism; AMP biosynthesis via salvage pathway; AMP from ADP: step 1/1.</text>
</comment>
<comment type="subunit">
    <text evidence="1">Monomer.</text>
</comment>
<comment type="subcellular location">
    <subcellularLocation>
        <location evidence="1">Cytoplasm</location>
    </subcellularLocation>
</comment>
<comment type="domain">
    <text evidence="1">Consists of three domains, a large central CORE domain and two small peripheral domains, NMPbind and LID, which undergo movements during catalysis. The LID domain closes over the site of phosphoryl transfer upon ATP binding. Assembling and dissambling the active center during each catalytic cycle provides an effective means to prevent ATP hydrolysis.</text>
</comment>
<comment type="similarity">
    <text evidence="1">Belongs to the adenylate kinase family.</text>
</comment>